<organism>
    <name type="scientific">Encephalitozoon cuniculi (strain GB-M1)</name>
    <name type="common">Microsporidian parasite</name>
    <dbReference type="NCBI Taxonomy" id="284813"/>
    <lineage>
        <taxon>Eukaryota</taxon>
        <taxon>Fungi</taxon>
        <taxon>Fungi incertae sedis</taxon>
        <taxon>Microsporidia</taxon>
        <taxon>Unikaryonidae</taxon>
        <taxon>Encephalitozoon</taxon>
    </lineage>
</organism>
<name>DPH3_ENCCU</name>
<dbReference type="EMBL" id="AL590451">
    <property type="protein sequence ID" value="CAD27074.1"/>
    <property type="molecule type" value="Genomic_DNA"/>
</dbReference>
<dbReference type="RefSeq" id="XP_955655.1">
    <property type="nucleotide sequence ID" value="XM_950562.1"/>
</dbReference>
<dbReference type="SMR" id="Q8STR6"/>
<dbReference type="FunCoup" id="Q8STR6">
    <property type="interactions" value="76"/>
</dbReference>
<dbReference type="STRING" id="284813.Q8STR6"/>
<dbReference type="VEuPathDB" id="MicrosporidiaDB:ECU09_1005"/>
<dbReference type="HOGENOM" id="CLU_155991_2_0_1"/>
<dbReference type="InParanoid" id="Q8STR6"/>
<dbReference type="OMA" id="IYDPDMF"/>
<dbReference type="OrthoDB" id="66964at2759"/>
<dbReference type="UniPathway" id="UPA00559"/>
<dbReference type="Proteomes" id="UP000000819">
    <property type="component" value="Chromosome IX"/>
</dbReference>
<dbReference type="GO" id="GO:0005737">
    <property type="term" value="C:cytoplasm"/>
    <property type="evidence" value="ECO:0007669"/>
    <property type="project" value="UniProtKB-SubCell"/>
</dbReference>
<dbReference type="GO" id="GO:0005634">
    <property type="term" value="C:nucleus"/>
    <property type="evidence" value="ECO:0007669"/>
    <property type="project" value="UniProtKB-SubCell"/>
</dbReference>
<dbReference type="GO" id="GO:0008198">
    <property type="term" value="F:ferrous iron binding"/>
    <property type="evidence" value="ECO:0000250"/>
    <property type="project" value="UniProtKB"/>
</dbReference>
<dbReference type="GO" id="GO:0034986">
    <property type="term" value="F:iron chaperone activity"/>
    <property type="evidence" value="ECO:0000250"/>
    <property type="project" value="UniProtKB"/>
</dbReference>
<dbReference type="GO" id="GO:0016491">
    <property type="term" value="F:oxidoreductase activity"/>
    <property type="evidence" value="ECO:0007669"/>
    <property type="project" value="UniProtKB-KW"/>
</dbReference>
<dbReference type="GO" id="GO:0017183">
    <property type="term" value="P:protein histidyl modification to diphthamide"/>
    <property type="evidence" value="ECO:0000250"/>
    <property type="project" value="UniProtKB"/>
</dbReference>
<dbReference type="GO" id="GO:0002926">
    <property type="term" value="P:tRNA wobble base 5-methoxycarbonylmethyl-2-thiouridinylation"/>
    <property type="evidence" value="ECO:0000250"/>
    <property type="project" value="UniProtKB"/>
</dbReference>
<dbReference type="FunFam" id="3.10.660.10:FF:000001">
    <property type="entry name" value="Diphthamide biosynthesis 3"/>
    <property type="match status" value="1"/>
</dbReference>
<dbReference type="Gene3D" id="3.10.660.10">
    <property type="entry name" value="DPH Zinc finger"/>
    <property type="match status" value="1"/>
</dbReference>
<dbReference type="InterPro" id="IPR044248">
    <property type="entry name" value="DPH3/4-like"/>
</dbReference>
<dbReference type="InterPro" id="IPR007872">
    <property type="entry name" value="DPH_MB_dom"/>
</dbReference>
<dbReference type="InterPro" id="IPR036671">
    <property type="entry name" value="DPH_MB_sf"/>
</dbReference>
<dbReference type="PANTHER" id="PTHR21454:SF31">
    <property type="entry name" value="DIPHTHAMIDE BIOSYNTHESIS PROTEIN 3"/>
    <property type="match status" value="1"/>
</dbReference>
<dbReference type="PANTHER" id="PTHR21454">
    <property type="entry name" value="DPH3 HOMOLOG-RELATED"/>
    <property type="match status" value="1"/>
</dbReference>
<dbReference type="Pfam" id="PF05207">
    <property type="entry name" value="Zn_ribbon_CSL"/>
    <property type="match status" value="1"/>
</dbReference>
<dbReference type="SUPFAM" id="SSF144217">
    <property type="entry name" value="CSL zinc finger"/>
    <property type="match status" value="1"/>
</dbReference>
<dbReference type="PROSITE" id="PS51074">
    <property type="entry name" value="DPH_MB"/>
    <property type="match status" value="1"/>
</dbReference>
<keyword id="KW-0963">Cytoplasm</keyword>
<keyword id="KW-0408">Iron</keyword>
<keyword id="KW-0479">Metal-binding</keyword>
<keyword id="KW-0539">Nucleus</keyword>
<keyword id="KW-0560">Oxidoreductase</keyword>
<keyword id="KW-1185">Reference proteome</keyword>
<sequence length="93" mass="10949">MSFRPEYKEYFKQGATARIYNGAFEDAGFYDEVDIKEFEYSREEKTFYYPCPCGDRFEISLEDLRNGEVVARCPSCSLIVCTVYEAEDLEKYL</sequence>
<accession>Q8STR6</accession>
<reference key="1">
    <citation type="journal article" date="2001" name="Nature">
        <title>Genome sequence and gene compaction of the eukaryote parasite Encephalitozoon cuniculi.</title>
        <authorList>
            <person name="Katinka M.D."/>
            <person name="Duprat S."/>
            <person name="Cornillot E."/>
            <person name="Metenier G."/>
            <person name="Thomarat F."/>
            <person name="Prensier G."/>
            <person name="Barbe V."/>
            <person name="Peyretaillade E."/>
            <person name="Brottier P."/>
            <person name="Wincker P."/>
            <person name="Delbac F."/>
            <person name="El Alaoui H."/>
            <person name="Peyret P."/>
            <person name="Saurin W."/>
            <person name="Gouy M."/>
            <person name="Weissenbach J."/>
            <person name="Vivares C.P."/>
        </authorList>
    </citation>
    <scope>NUCLEOTIDE SEQUENCE [LARGE SCALE GENOMIC DNA]</scope>
    <source>
        <strain>GB-M1</strain>
    </source>
</reference>
<gene>
    <name type="primary">DPH3</name>
    <name type="ordered locus">ECU09_1005</name>
</gene>
<comment type="function">
    <text evidence="2">Required for the first step of diphthamide biosynthesis, a post-translational modification of histidine which occurs in elongation factor 2. DPH1 and DPH2 transfer a 3-amino-3-carboxypropyl (ACP) group from S-adenosyl-L-methionine (SAM) to a histidine residue, the reaction is assisted by a reduction system comprising KTI11/DPH3 and a NADH-dependent reductase, predominantly CBR1. Acts as an electron donor to reduce the Fe-S cluster in DPH1-DPH2 keeping the [4Fe-4S] clusters in the active and reduced state. Restores iron to DPH1-DPH2 iron-sulfur clusters which have degraded from [4Fe-4S] to [3Fe-4S] by donating an iron atom to reform [4Fe-4S] clusters, in a manner dependent on the presence of elongation factor 2 and SAM. Associates with the elongator complex and is required for tRNA Wobble base modifications mediated by the elongator complex. The elongator complex is required for multiple tRNA modifications, including mcm5U (5-methoxycarbonylmethyl uridine), mcm5s 2U (5-methoxycarbonylmethyl-2-thiouridine), and ncm5U (5-carbamoylmethyl uridine).</text>
</comment>
<comment type="catalytic activity">
    <reaction evidence="2">
        <text>[3Fe-4S](1+)-[protein] + Fe(2+)-[Dph3] = [3Fe-4S](0)-[protein] + Fe(3+)-[Dph3]</text>
        <dbReference type="Rhea" id="RHEA:71235"/>
        <dbReference type="Rhea" id="RHEA-COMP:17996"/>
        <dbReference type="Rhea" id="RHEA-COMP:17997"/>
        <dbReference type="Rhea" id="RHEA-COMP:18002"/>
        <dbReference type="Rhea" id="RHEA-COMP:18003"/>
        <dbReference type="ChEBI" id="CHEBI:29033"/>
        <dbReference type="ChEBI" id="CHEBI:29034"/>
        <dbReference type="ChEBI" id="CHEBI:33751"/>
        <dbReference type="ChEBI" id="CHEBI:47402"/>
        <dbReference type="ChEBI" id="CHEBI:83228"/>
    </reaction>
</comment>
<comment type="catalytic activity">
    <reaction evidence="2">
        <text>2 [3Fe-4S](0)-[protein] + 2 Fe(2+)-[Dph3] + NADH = 2 [4Fe-4S](1+)-[protein] + 2 [Dph3] + NAD(+) + H(+)</text>
        <dbReference type="Rhea" id="RHEA:71239"/>
        <dbReference type="Rhea" id="RHEA-COMP:17997"/>
        <dbReference type="Rhea" id="RHEA-COMP:17998"/>
        <dbReference type="Rhea" id="RHEA-COMP:18001"/>
        <dbReference type="Rhea" id="RHEA-COMP:18002"/>
        <dbReference type="ChEBI" id="CHEBI:15378"/>
        <dbReference type="ChEBI" id="CHEBI:29033"/>
        <dbReference type="ChEBI" id="CHEBI:33723"/>
        <dbReference type="ChEBI" id="CHEBI:47402"/>
        <dbReference type="ChEBI" id="CHEBI:57540"/>
        <dbReference type="ChEBI" id="CHEBI:57945"/>
        <dbReference type="ChEBI" id="CHEBI:83228"/>
    </reaction>
</comment>
<comment type="cofactor">
    <cofactor evidence="2">
        <name>Fe(2+)</name>
        <dbReference type="ChEBI" id="CHEBI:29033"/>
    </cofactor>
</comment>
<comment type="pathway">
    <text evidence="2">Protein modification; peptidyl-diphthamide biosynthesis.</text>
</comment>
<comment type="subunit">
    <text evidence="2">Component of the 2-(3-amino-3-carboxypropyl)histidine synthase complex composed of DPH1, DPH2, DPH3 and a NADH-dependent reductase, predominantly CBR1.</text>
</comment>
<comment type="subcellular location">
    <subcellularLocation>
        <location evidence="1">Cytoplasm</location>
    </subcellularLocation>
    <subcellularLocation>
        <location evidence="1">Nucleus</location>
    </subcellularLocation>
</comment>
<comment type="domain">
    <text evidence="2">The DPH-type metal-binding (MB) domain can also bind zinc. However, iron is the physiological binding partner as zinc binding impairs the protein electron donor function.</text>
</comment>
<comment type="similarity">
    <text evidence="4">Belongs to the DPH3 family.</text>
</comment>
<protein>
    <recommendedName>
        <fullName>Diphthamide biosynthesis protein 3</fullName>
    </recommendedName>
</protein>
<evidence type="ECO:0000250" key="1"/>
<evidence type="ECO:0000250" key="2">
    <source>
        <dbReference type="UniProtKB" id="Q3E840"/>
    </source>
</evidence>
<evidence type="ECO:0000255" key="3">
    <source>
        <dbReference type="PROSITE-ProRule" id="PRU00456"/>
    </source>
</evidence>
<evidence type="ECO:0000305" key="4"/>
<feature type="chain" id="PRO_0000082632" description="Diphthamide biosynthesis protein 3">
    <location>
        <begin position="1"/>
        <end position="93"/>
    </location>
</feature>
<feature type="domain" description="DPH-type MB" evidence="3">
    <location>
        <begin position="29"/>
        <end position="85"/>
    </location>
</feature>
<feature type="binding site" evidence="2">
    <location>
        <position position="51"/>
    </location>
    <ligand>
        <name>Fe cation</name>
        <dbReference type="ChEBI" id="CHEBI:24875"/>
    </ligand>
</feature>
<feature type="binding site" evidence="2">
    <location>
        <position position="53"/>
    </location>
    <ligand>
        <name>Fe cation</name>
        <dbReference type="ChEBI" id="CHEBI:24875"/>
    </ligand>
</feature>
<feature type="binding site" evidence="2">
    <location>
        <position position="73"/>
    </location>
    <ligand>
        <name>Fe cation</name>
        <dbReference type="ChEBI" id="CHEBI:24875"/>
    </ligand>
</feature>
<feature type="binding site" evidence="2">
    <location>
        <position position="76"/>
    </location>
    <ligand>
        <name>Fe cation</name>
        <dbReference type="ChEBI" id="CHEBI:24875"/>
    </ligand>
</feature>
<proteinExistence type="inferred from homology"/>